<comment type="function">
    <text evidence="4 5 6 9">Regulation of oxygen dependent gene expression. It modulates the expression of Iso-1 (CYP1) and Iso-2 (CYP3) cytochrome c. In response to heme, promotes transcription of genes encoding functions required for respiration, controlling oxidative damage and repression of anaerobic genes. Binds to the sequence 5'-CGGNNNTNNCGG-3'. Is non-functional in terms of iso-1 cytochrome c expression in strain S288c and its derivatives.</text>
</comment>
<comment type="subunit">
    <text evidence="5 8 10">Binds DNA as a homodimer. Interacts with SRO9 and YDJ1. In the absence of heme, binds to at least four cellular proteins, including YDJ1 and SRO9, forming a high-molecular-weight complex (HMC) which results in repression of its activity and dictates its DNA-binding specificity.</text>
</comment>
<comment type="interaction">
    <interactant intactId="EBI-5419">
        <id>P0CS82</id>
    </interactant>
    <interactant intactId="EBI-8659">
        <id>P02829</id>
        <label>HSP82</label>
    </interactant>
    <organismsDiffer>true</organismsDiffer>
    <experiments>3</experiments>
</comment>
<comment type="subcellular location">
    <subcellularLocation>
        <location evidence="2 8">Nucleus</location>
    </subcellularLocation>
</comment>
<comment type="miscellaneous">
    <text>Heme is an effector molecule for CYP1/HAP1. The HRM repeat region mediates heme induction by masking the DNA-binding domain in the absence of inducer.</text>
</comment>
<keyword id="KW-0002">3D-structure</keyword>
<keyword id="KW-0010">Activator</keyword>
<keyword id="KW-0175">Coiled coil</keyword>
<keyword id="KW-0238">DNA-binding</keyword>
<keyword id="KW-0349">Heme</keyword>
<keyword id="KW-0408">Iron</keyword>
<keyword id="KW-0479">Metal-binding</keyword>
<keyword id="KW-0539">Nucleus</keyword>
<keyword id="KW-0677">Repeat</keyword>
<keyword id="KW-0804">Transcription</keyword>
<keyword id="KW-0805">Transcription regulation</keyword>
<keyword id="KW-0862">Zinc</keyword>
<dbReference type="EMBL" id="X13793">
    <property type="protein sequence ID" value="CAA32032.1"/>
    <property type="molecule type" value="Genomic_DNA"/>
</dbReference>
<dbReference type="EMBL" id="J03152">
    <property type="protein sequence ID" value="AAA34662.1"/>
    <property type="molecule type" value="Genomic_DNA"/>
</dbReference>
<dbReference type="PIR" id="S59400">
    <property type="entry name" value="RGBYH1"/>
</dbReference>
<dbReference type="PDB" id="1HWT">
    <property type="method" value="X-ray"/>
    <property type="resolution" value="2.50 A"/>
    <property type="chains" value="C/D/G/H=55-135"/>
</dbReference>
<dbReference type="PDB" id="1PYC">
    <property type="method" value="NMR"/>
    <property type="chains" value="A=56-126"/>
</dbReference>
<dbReference type="PDB" id="1QP9">
    <property type="method" value="X-ray"/>
    <property type="resolution" value="2.80 A"/>
    <property type="chains" value="A/B/C/D=55-130"/>
</dbReference>
<dbReference type="PDB" id="2HAP">
    <property type="method" value="X-ray"/>
    <property type="resolution" value="2.50 A"/>
    <property type="chains" value="C/D=55-135"/>
</dbReference>
<dbReference type="PDBsum" id="1HWT"/>
<dbReference type="PDBsum" id="1PYC"/>
<dbReference type="PDBsum" id="1QP9"/>
<dbReference type="PDBsum" id="2HAP"/>
<dbReference type="SMR" id="P0CS82"/>
<dbReference type="IntAct" id="P0CS82">
    <property type="interactions" value="4"/>
</dbReference>
<dbReference type="MINT" id="P0CS82"/>
<dbReference type="CarbonylDB" id="P0CS82"/>
<dbReference type="VEuPathDB" id="FungiDB:YLR256W"/>
<dbReference type="EvolutionaryTrace" id="P0CS82"/>
<dbReference type="GO" id="GO:0005634">
    <property type="term" value="C:nucleus"/>
    <property type="evidence" value="ECO:0007669"/>
    <property type="project" value="UniProtKB-SubCell"/>
</dbReference>
<dbReference type="GO" id="GO:0001228">
    <property type="term" value="F:DNA-binding transcription activator activity, RNA polymerase II-specific"/>
    <property type="evidence" value="ECO:0007669"/>
    <property type="project" value="TreeGrafter"/>
</dbReference>
<dbReference type="GO" id="GO:0000978">
    <property type="term" value="F:RNA polymerase II cis-regulatory region sequence-specific DNA binding"/>
    <property type="evidence" value="ECO:0007669"/>
    <property type="project" value="TreeGrafter"/>
</dbReference>
<dbReference type="GO" id="GO:0008270">
    <property type="term" value="F:zinc ion binding"/>
    <property type="evidence" value="ECO:0007669"/>
    <property type="project" value="InterPro"/>
</dbReference>
<dbReference type="GO" id="GO:0006351">
    <property type="term" value="P:DNA-templated transcription"/>
    <property type="evidence" value="ECO:0007669"/>
    <property type="project" value="InterPro"/>
</dbReference>
<dbReference type="CDD" id="cd12148">
    <property type="entry name" value="fungal_TF_MHR"/>
    <property type="match status" value="1"/>
</dbReference>
<dbReference type="CDD" id="cd00067">
    <property type="entry name" value="GAL4"/>
    <property type="match status" value="1"/>
</dbReference>
<dbReference type="CDD" id="cd14655">
    <property type="entry name" value="ZIP_Hap1"/>
    <property type="match status" value="1"/>
</dbReference>
<dbReference type="FunFam" id="4.10.240.10:FF:000014">
    <property type="entry name" value="HAP1p Zinc finger transcription factor"/>
    <property type="match status" value="1"/>
</dbReference>
<dbReference type="Gene3D" id="1.20.5.170">
    <property type="match status" value="1"/>
</dbReference>
<dbReference type="Gene3D" id="4.10.240.10">
    <property type="entry name" value="Zn(2)-C6 fungal-type DNA-binding domain"/>
    <property type="match status" value="1"/>
</dbReference>
<dbReference type="InterPro" id="IPR046347">
    <property type="entry name" value="bZIP_sf"/>
</dbReference>
<dbReference type="InterPro" id="IPR051430">
    <property type="entry name" value="Fungal_TF_Env_Response"/>
</dbReference>
<dbReference type="InterPro" id="IPR007219">
    <property type="entry name" value="Transcription_factor_dom_fun"/>
</dbReference>
<dbReference type="InterPro" id="IPR036864">
    <property type="entry name" value="Zn2-C6_fun-type_DNA-bd_sf"/>
</dbReference>
<dbReference type="InterPro" id="IPR001138">
    <property type="entry name" value="Zn2Cys6_DnaBD"/>
</dbReference>
<dbReference type="PANTHER" id="PTHR31944">
    <property type="entry name" value="HEME-RESPONSIVE ZINC FINGER TRANSCRIPTION FACTOR HAP1"/>
    <property type="match status" value="1"/>
</dbReference>
<dbReference type="PANTHER" id="PTHR31944:SF131">
    <property type="entry name" value="HEME-RESPONSIVE ZINC FINGER TRANSCRIPTION FACTOR HAP1"/>
    <property type="match status" value="1"/>
</dbReference>
<dbReference type="Pfam" id="PF00172">
    <property type="entry name" value="Zn_clus"/>
    <property type="match status" value="1"/>
</dbReference>
<dbReference type="SMART" id="SM00906">
    <property type="entry name" value="Fungal_trans"/>
    <property type="match status" value="1"/>
</dbReference>
<dbReference type="SMART" id="SM00066">
    <property type="entry name" value="GAL4"/>
    <property type="match status" value="1"/>
</dbReference>
<dbReference type="SUPFAM" id="SSF57959">
    <property type="entry name" value="Leucine zipper domain"/>
    <property type="match status" value="1"/>
</dbReference>
<dbReference type="SUPFAM" id="SSF57701">
    <property type="entry name" value="Zn2/Cys6 DNA-binding domain"/>
    <property type="match status" value="1"/>
</dbReference>
<dbReference type="PROSITE" id="PS00463">
    <property type="entry name" value="ZN2_CY6_FUNGAL_1"/>
    <property type="match status" value="1"/>
</dbReference>
<dbReference type="PROSITE" id="PS50048">
    <property type="entry name" value="ZN2_CY6_FUNGAL_2"/>
    <property type="match status" value="1"/>
</dbReference>
<organism>
    <name type="scientific">Saccharomyces cerevisiae</name>
    <name type="common">Baker's yeast</name>
    <dbReference type="NCBI Taxonomy" id="4932"/>
    <lineage>
        <taxon>Eukaryota</taxon>
        <taxon>Fungi</taxon>
        <taxon>Dikarya</taxon>
        <taxon>Ascomycota</taxon>
        <taxon>Saccharomycotina</taxon>
        <taxon>Saccharomycetes</taxon>
        <taxon>Saccharomycetales</taxon>
        <taxon>Saccharomycetaceae</taxon>
        <taxon>Saccharomyces</taxon>
    </lineage>
</organism>
<name>HAP1_YEASX</name>
<feature type="chain" id="PRO_0000392063" description="Heme-responsive zinc finger transcription factor HAP1">
    <location>
        <begin position="1"/>
        <end position="1483"/>
    </location>
</feature>
<feature type="repeat" description="HRM 1">
    <location>
        <begin position="280"/>
        <end position="285"/>
    </location>
</feature>
<feature type="repeat" description="HRM 2">
    <location>
        <begin position="299"/>
        <end position="304"/>
    </location>
</feature>
<feature type="repeat" description="HRM 3">
    <location>
        <begin position="323"/>
        <end position="328"/>
    </location>
</feature>
<feature type="repeat" description="HRM 4">
    <location>
        <begin position="347"/>
        <end position="352"/>
    </location>
</feature>
<feature type="repeat" description="HRM 5">
    <location>
        <begin position="389"/>
        <end position="394"/>
    </location>
</feature>
<feature type="repeat" description="HRM 6">
    <location>
        <begin position="415"/>
        <end position="420"/>
    </location>
</feature>
<feature type="repeat" description="HRM 7">
    <location>
        <begin position="1192"/>
        <end position="1197"/>
    </location>
</feature>
<feature type="DNA-binding region" description="Zn(2)-C6 fungal-type" evidence="2">
    <location>
        <begin position="64"/>
        <end position="93"/>
    </location>
</feature>
<feature type="region of interest" description="Disordered" evidence="3">
    <location>
        <begin position="1"/>
        <end position="56"/>
    </location>
</feature>
<feature type="region of interest" description="Disordered" evidence="3">
    <location>
        <begin position="126"/>
        <end position="208"/>
    </location>
</feature>
<feature type="region of interest" description="Heme-responsive; required for HMC formation">
    <location>
        <begin position="244"/>
        <end position="444"/>
    </location>
</feature>
<feature type="region of interest" description="Disordered" evidence="3">
    <location>
        <begin position="432"/>
        <end position="458"/>
    </location>
</feature>
<feature type="region of interest" description="Disordered" evidence="3">
    <location>
        <begin position="706"/>
        <end position="767"/>
    </location>
</feature>
<feature type="region of interest" description="Disordered" evidence="3">
    <location>
        <begin position="1384"/>
        <end position="1411"/>
    </location>
</feature>
<feature type="coiled-coil region" evidence="1">
    <location>
        <begin position="105"/>
        <end position="134"/>
    </location>
</feature>
<feature type="compositionally biased region" description="Polar residues" evidence="3">
    <location>
        <begin position="1"/>
        <end position="50"/>
    </location>
</feature>
<feature type="compositionally biased region" description="Low complexity" evidence="3">
    <location>
        <begin position="130"/>
        <end position="142"/>
    </location>
</feature>
<feature type="compositionally biased region" description="Polar residues" evidence="3">
    <location>
        <begin position="143"/>
        <end position="152"/>
    </location>
</feature>
<feature type="compositionally biased region" description="Polar residues" evidence="3">
    <location>
        <begin position="160"/>
        <end position="176"/>
    </location>
</feature>
<feature type="compositionally biased region" description="Low complexity" evidence="3">
    <location>
        <begin position="177"/>
        <end position="208"/>
    </location>
</feature>
<feature type="compositionally biased region" description="Polar residues" evidence="3">
    <location>
        <begin position="432"/>
        <end position="447"/>
    </location>
</feature>
<feature type="compositionally biased region" description="Polar residues" evidence="3">
    <location>
        <begin position="706"/>
        <end position="734"/>
    </location>
</feature>
<feature type="compositionally biased region" description="Low complexity" evidence="3">
    <location>
        <begin position="735"/>
        <end position="759"/>
    </location>
</feature>
<feature type="compositionally biased region" description="Polar residues" evidence="3">
    <location>
        <begin position="1388"/>
        <end position="1411"/>
    </location>
</feature>
<feature type="binding site">
    <location>
        <position position="64"/>
    </location>
    <ligand>
        <name>Zn(2+)</name>
        <dbReference type="ChEBI" id="CHEBI:29105"/>
        <label>1</label>
    </ligand>
</feature>
<feature type="binding site">
    <location>
        <position position="64"/>
    </location>
    <ligand>
        <name>Zn(2+)</name>
        <dbReference type="ChEBI" id="CHEBI:29105"/>
        <label>2</label>
    </ligand>
</feature>
<feature type="binding site">
    <location>
        <position position="67"/>
    </location>
    <ligand>
        <name>Zn(2+)</name>
        <dbReference type="ChEBI" id="CHEBI:29105"/>
        <label>1</label>
    </ligand>
</feature>
<feature type="binding site">
    <location>
        <position position="74"/>
    </location>
    <ligand>
        <name>Zn(2+)</name>
        <dbReference type="ChEBI" id="CHEBI:29105"/>
        <label>1</label>
    </ligand>
</feature>
<feature type="binding site">
    <location>
        <position position="81"/>
    </location>
    <ligand>
        <name>Zn(2+)</name>
        <dbReference type="ChEBI" id="CHEBI:29105"/>
        <label>1</label>
    </ligand>
</feature>
<feature type="binding site">
    <location>
        <position position="81"/>
    </location>
    <ligand>
        <name>Zn(2+)</name>
        <dbReference type="ChEBI" id="CHEBI:29105"/>
        <label>2</label>
    </ligand>
</feature>
<feature type="binding site">
    <location>
        <position position="84"/>
    </location>
    <ligand>
        <name>Zn(2+)</name>
        <dbReference type="ChEBI" id="CHEBI:29105"/>
        <label>2</label>
    </ligand>
</feature>
<feature type="binding site">
    <location>
        <position position="93"/>
    </location>
    <ligand>
        <name>Zn(2+)</name>
        <dbReference type="ChEBI" id="CHEBI:29105"/>
        <label>2</label>
    </ligand>
</feature>
<feature type="mutagenesis site" description="In CYP1-18; activates the expression of CYP3 (Iso-2) while reducing that of CYC1 (Iso-1)." evidence="6 7">
    <original>S</original>
    <variation>R</variation>
    <location>
        <position position="63"/>
    </location>
</feature>
<feature type="sequence conflict" description="In Ref. 2; AAA34662." evidence="11" ref="2">
    <original>T</original>
    <variation>I</variation>
    <location>
        <position position="145"/>
    </location>
</feature>
<feature type="sequence conflict" description="In Ref. 2; AAA34662." evidence="11" ref="2">
    <original>K</original>
    <variation>R</variation>
    <location>
        <position position="323"/>
    </location>
</feature>
<feature type="sequence conflict" description="In Ref. 2; AAA34662." evidence="11" ref="2">
    <original>S</original>
    <variation>N</variation>
    <location>
        <position position="455"/>
    </location>
</feature>
<feature type="sequence conflict" description="In Ref. 2; AAA34662." evidence="11" ref="2">
    <original>V</original>
    <variation>M</variation>
    <location>
        <position position="508"/>
    </location>
</feature>
<feature type="sequence conflict" description="In Ref. 2; AAA34662." evidence="11" ref="2">
    <original>N</original>
    <variation>K</variation>
    <location>
        <position position="587"/>
    </location>
</feature>
<feature type="sequence conflict" description="In Ref. 2; AAA34662." evidence="11" ref="2">
    <original>D</original>
    <variation>N</variation>
    <location>
        <position position="883"/>
    </location>
</feature>
<feature type="sequence conflict" description="In Ref. 2; AAA34662." evidence="11" ref="2">
    <original>H</original>
    <variation>S</variation>
    <location>
        <position position="960"/>
    </location>
</feature>
<feature type="sequence conflict" description="In Ref. 2; AAA34662." evidence="11" ref="2">
    <original>D</original>
    <variation>N</variation>
    <location>
        <position position="1151"/>
    </location>
</feature>
<feature type="sequence conflict" description="In Ref. 2; AAA34662." evidence="11" ref="2">
    <original>S</original>
    <variation>P</variation>
    <location>
        <position position="1157"/>
    </location>
</feature>
<feature type="sequence conflict" description="In Ref. 2; AAA34662." evidence="11" ref="2">
    <original>N</original>
    <variation>Y</variation>
    <location>
        <position position="1305"/>
    </location>
</feature>
<feature type="helix" evidence="12">
    <location>
        <begin position="65"/>
        <end position="70"/>
    </location>
</feature>
<feature type="strand" evidence="12">
    <location>
        <begin position="78"/>
        <end position="80"/>
    </location>
</feature>
<feature type="helix" evidence="12">
    <location>
        <begin position="82"/>
        <end position="87"/>
    </location>
</feature>
<feature type="helix" evidence="12">
    <location>
        <begin position="90"/>
        <end position="92"/>
    </location>
</feature>
<feature type="helix" evidence="12">
    <location>
        <begin position="100"/>
        <end position="125"/>
    </location>
</feature>
<proteinExistence type="evidence at protein level"/>
<accession>P0CS82</accession>
<accession>P0CE42</accession>
<accession>P12351</accession>
<accession>Q06574</accession>
<accession>Q6BD21</accession>
<reference key="1">
    <citation type="journal article" date="1988" name="J. Mol. Biol.">
        <title>CYP1 (HAP1) regulator of oxygen-dependent gene expression in yeast. I. Overall organization of the protein sequence displays several novel structural domains.</title>
        <authorList>
            <person name="Creusot F."/>
            <person name="Verdiere J."/>
            <person name="Gaisne M."/>
            <person name="Slonimski P.P."/>
        </authorList>
    </citation>
    <scope>NUCLEOTIDE SEQUENCE [GENOMIC DNA]</scope>
    <scope>FUNCTION</scope>
    <scope>MUTAGENESIS OF SER-63</scope>
</reference>
<reference key="2">
    <citation type="journal article" date="1989" name="Cell">
        <title>Functional dissection and sequence of yeast HAP1 activator.</title>
        <authorList>
            <person name="Pfeifer K."/>
            <person name="Kim K.-S."/>
            <person name="Kogan S."/>
            <person name="Guarente L."/>
        </authorList>
    </citation>
    <scope>NUCLEOTIDE SEQUENCE [GENOMIC DNA]</scope>
    <source>
        <strain>ATCC MYA-3516 / BWG1-7A</strain>
    </source>
</reference>
<reference key="3">
    <citation type="journal article" date="1994" name="J. Biol. Chem.">
        <title>HAP1 is nuclear but is bound to a cellular factor in the absence of heme.</title>
        <authorList>
            <person name="Zhang L."/>
            <person name="Guarente L."/>
        </authorList>
    </citation>
    <scope>SUBUNIT</scope>
    <scope>SUBCELLULAR LOCATION</scope>
</reference>
<reference key="4">
    <citation type="journal article" date="1996" name="EMBO J.">
        <title>The C6 zinc cluster dictates asymmetric binding by HAP1.</title>
        <authorList>
            <person name="Zhang L."/>
            <person name="Guarente L."/>
        </authorList>
    </citation>
    <scope>DNA-BINDING</scope>
</reference>
<reference key="5">
    <citation type="journal article" date="1997" name="Kidney Int.">
        <title>Regulation of hypoxic gene expression in yeast.</title>
        <authorList>
            <person name="Zitomer R.S."/>
            <person name="Carrico P."/>
            <person name="Deckert J."/>
        </authorList>
    </citation>
    <scope>FUNCTION</scope>
</reference>
<reference key="6">
    <citation type="journal article" date="1999" name="Curr. Genet.">
        <title>A 'natural' mutation in Saccharomyces cerevisiae strains derived from S288c affects the complex regulatory gene HAP1 (CYP1).</title>
        <authorList>
            <person name="Gaisne M."/>
            <person name="Becam A.-M."/>
            <person name="Verdiere J."/>
            <person name="Herbert C.J."/>
        </authorList>
    </citation>
    <scope>FUNCTION</scope>
    <scope>IDENTIFICATION OF STRAIN-SPECIFIC DEFECTIVE TY1 INSERTION</scope>
</reference>
<reference key="7">
    <citation type="journal article" date="2001" name="Mol. Cell. Biol.">
        <title>The Hsp70-Ydj1 molecular chaperone represses the activity of the heme activator protein Hap1 in the absence of heme.</title>
        <authorList>
            <person name="Hon T."/>
            <person name="Lee H.C."/>
            <person name="Hach A."/>
            <person name="Johnson J.L."/>
            <person name="Craig E.A."/>
            <person name="Erdjument-Bromage H."/>
            <person name="Tempst P."/>
            <person name="Zhang L."/>
        </authorList>
    </citation>
    <scope>FUNCTION</scope>
    <scope>SUBUNIT</scope>
</reference>
<reference key="8">
    <citation type="journal article" date="1996" name="J. Mol. Biol.">
        <title>1H, 15N resonance assignment and three-dimensional structure of CYP1 (HAP1) DNA-binding domain.</title>
        <authorList>
            <person name="Timmerman J."/>
            <person name="Vuidepot A.-L."/>
            <person name="Bontems F."/>
            <person name="Lallemand J.-Y."/>
            <person name="Gervais M."/>
            <person name="Shechter E."/>
            <person name="Guiard B."/>
        </authorList>
    </citation>
    <scope>STRUCTURE BY NMR OF 60-100</scope>
</reference>
<reference key="9">
    <citation type="journal article" date="1999" name="Nat. Struct. Biol.">
        <title>Structure of HAP1-18-DNA implicates direct allosteric effect of protein-DNA interactions on transcriptional activation.</title>
        <authorList>
            <person name="King D.A."/>
            <person name="Zhang L."/>
            <person name="Guarente L."/>
            <person name="Marmorstein R."/>
        </authorList>
    </citation>
    <scope>X-RAY CRYSTALLOGRAPHY (2.5 ANGSTROMS) OF 55-135 OF MUTANT HAP1-18 COMPLEXED WITH DNA</scope>
</reference>
<reference key="10">
    <citation type="journal article" date="1999" name="Nat. Struct. Biol.">
        <title>Structure of a HAP1-DNA complex reveals dramatically asymmetric DNA binding by a homodimeric protein.</title>
        <authorList>
            <person name="King D.A."/>
            <person name="Zhang L."/>
            <person name="Guarente L."/>
            <person name="Marmorstein R."/>
        </authorList>
    </citation>
    <scope>X-RAY CRYSTALLOGRAPHY (2.5 ANGSTROMS) OF 56-135 IN COMPLEX WITH DNA</scope>
</reference>
<reference key="11">
    <citation type="journal article" date="2000" name="Nucleic Acids Res.">
        <title>Structure of HAP1-PC7 bound to DNA: implications for DNA recognition and allosteric effects of DNA-binding on transcriptional activation.</title>
        <authorList>
            <person name="Lukens A.K."/>
            <person name="King D.A."/>
            <person name="Marmorstein R."/>
        </authorList>
    </citation>
    <scope>X-RAY CRYSTALLOGRAPHY (2.8 ANGSTROMS) OF 55-135 OF MUTANT HAP1-PC7 COMPLEXED WITH DNA</scope>
</reference>
<reference key="12">
    <citation type="journal article" date="1988" name="J. Mol. Biol.">
        <title>CYP1 (HAP1) regulator of oxygen-dependent gene expression in yeast. II. Missense mutation suggests alternative Zn fingers as discriminating agents of gene control.</title>
        <authorList>
            <person name="Verdiere J."/>
            <person name="Gaisne M."/>
            <person name="Guiard B."/>
            <person name="Defranoux N."/>
            <person name="Slonimski P.P."/>
        </authorList>
    </citation>
    <scope>MUTAGENESIS OF SER-63</scope>
</reference>
<sequence>MSNTPYNSSVPSIASMTQSSVSRSPNMHTATTPGANTSSNSPPLHMSSDSSKIKRKRNRIPLSCTICRKRKVKCDKLRPHCQQCTKTGVAHLCHYMEQTWAEEAEKELLKDNELKKLRERVKSLEKTLSKVHSSPSSNSLKSYNTPESSNLFMGSDEHTTLVNANTGSASSASHMHQQQQQQQQQEQQQDFSRSANANANSSSLSISNKYDNDELDLTKDFDLLHIKSNGTIHLGATHWLSIMKGDPYLKLLWGHIFAMREKLNEWYYQKNSYSKLKSSKCPINHAQAPPSAAAAATRKCPVDHSAFSSGMVAPKEETPLPRKCPVDHTMFSSGMIPPREDTSSQKRCPVDHTMYSAGMMPPKDETPSPFSTKAMIDHNKHTMNPPQSKCPVDHRNYMKDYPSDMANSSSNPASRCPIDHSSMKNTAALPASTHNTIPHHQPQSGSHARSHPAQSRKHDSYMTESEVLATLCEMLPPKRVIALFIEKFFKHLYPAIPILDEQNFKNHVNQMLSLSSMNPTVNNFGMSMPSSSTLENQPITQINLPKLSDSCNLGILIIILRLTWLSIPSNSCEVDLGEESGSFLVPNESSNMSASALTSMAKEESLLLKHETPVEALELCQKYLIKFDELSSISNNNVNLTTVQFAIFYNFYMKSASNDLTTLTNTNNTGMANPGHDSESHQILLSNITQMAFSCGLHRDPDNFPQLNATIPATSQDVSNNGSKKANPSTNPTLNNNMSAATTNSSSRSGSADSRSGSNPVNKKENQVSIERFKHTWRKIWYYIVSMDVNQSLSLGSPRLLRNLRDFSDTKLPSASRIDYVRDIKELIIVKNFTLFFQIDLCIIAVLNHILNVSLARSVRKFELDSLINLLKNLTYGTENVNDVVSSLINKGLLPTSEGGSVDSNNDEIYGLPKLPDILNHGQHNQNLYADGRNTSSSDIDKKLDLPHESTTRALFFSKHMTIRMLLYLLNYILFTHYEPMGSEDPGTNILAKEYAQEALNFAMDGYRNCMIFFNNIRNTNSLFDYMNVILSYPCLDIGHRSLQFIVCLILRAKCGPLTGMRESSIITNGTSSGFNSSVEDEDVKVKQESSDELKKDDFMKDVNLDSGDSLAEILMSRMLLFQKLTKQLSKKYNYAIRMNKSTGFFVSLLDTPSKKSDSKSGGSSFMLGNWKHPKVSNMSGFLAGDKDQLQKCPVYQDALGFVSPTGANEGSAPMQGMSLQGSTARMGGTQLPPIRSYKPITYTSSNLRRMNETGEAEAKRRRFNDGYIDNNSNNDIPRGISPKPSNGLSSVQPLLSSFSMNQLNGGTIPTVPSLTNITSQMGALPSLDRITTNQINLPDPSRDEAFDNSIKQMTPMTSAFMNANTTIPSSTLNGNMNMNGAGTANTDTSANGSALSTLTSPQGSDLASNSATQYKPDLEDFLMQNSNFNGLMINPSSLVEVVGGYNDPNNLGRNDAVDFLPVDNVEIDGLVDFYRADFPIWE</sequence>
<gene>
    <name type="primary">HAP1</name>
    <name type="synonym">CYP1</name>
</gene>
<evidence type="ECO:0000255" key="1"/>
<evidence type="ECO:0000255" key="2">
    <source>
        <dbReference type="PROSITE-ProRule" id="PRU00227"/>
    </source>
</evidence>
<evidence type="ECO:0000256" key="3">
    <source>
        <dbReference type="SAM" id="MobiDB-lite"/>
    </source>
</evidence>
<evidence type="ECO:0000269" key="4">
    <source>
    </source>
</evidence>
<evidence type="ECO:0000269" key="5">
    <source>
    </source>
</evidence>
<evidence type="ECO:0000269" key="6">
    <source>
    </source>
</evidence>
<evidence type="ECO:0000269" key="7">
    <source>
    </source>
</evidence>
<evidence type="ECO:0000269" key="8">
    <source>
    </source>
</evidence>
<evidence type="ECO:0000269" key="9">
    <source>
    </source>
</evidence>
<evidence type="ECO:0000269" key="10">
    <source>
    </source>
</evidence>
<evidence type="ECO:0000305" key="11"/>
<evidence type="ECO:0007829" key="12">
    <source>
        <dbReference type="PDB" id="1HWT"/>
    </source>
</evidence>
<protein>
    <recommendedName>
        <fullName>Heme-responsive zinc finger transcription factor HAP1</fullName>
    </recommendedName>
    <alternativeName>
        <fullName>CYP1 activatory protein</fullName>
    </alternativeName>
    <alternativeName>
        <fullName>Heme activator protein 1</fullName>
    </alternativeName>
</protein>